<accession>Q8I1H7</accession>
<evidence type="ECO:0000255" key="1"/>
<evidence type="ECO:0000256" key="2">
    <source>
        <dbReference type="SAM" id="MobiDB-lite"/>
    </source>
</evidence>
<evidence type="ECO:0000305" key="3"/>
<sequence length="553" mass="62626">MDEVDKIIMHQLHQVDAAIEPTEELSGFTPEQVVRAVSGCLAEISPDLQLPRTLPGGAMAQRFGVASSLAQGCKDSGYRGDIGYQTFLYPNAVELRRLLMFLIEQLPRERQSAEDGASKSQTLSHRQLLERKIRKELAQQLKTPWVPQFARSVGNRKLLGCSSLGIEFRPNINLNIPSANPEERSKEQQQYLDQQAPNLFQQTASSSADLIASVLHKNELDRWDQTLSDSTLLFVDSEEPAPPPISTVKPDASAEEEASPIQELSDQVEELRVQCETLLAERKAHAVAIAALKQRETKASEEISRIQPTLKLHERTSLVLADSEENLTKLEALLKSTQSKRITLTQQWQDYRKPLLESLEKLKTAKEAQEVQGIRNNIEQLEQELLAKTQQHNELNATLRNASQSLAPRKEYTRRIHEFIGNIRKQRADIYKVLDDTRQLQKQLNVVGAQLQRQFNYTDDLLFQSAKHDLHAKRAYKLLAQLHANCNELVECVSLTGNVTKQIRELEVQIDGEKLKNVLTSLQQITGDIQKFEQHIQELQEQIRTVEQPNAGS</sequence>
<comment type="similarity">
    <text evidence="3">Belongs to the CCDC22 family.</text>
</comment>
<keyword id="KW-0175">Coiled coil</keyword>
<proteinExistence type="inferred from homology"/>
<organism>
    <name type="scientific">Drosophila erecta</name>
    <name type="common">Fruit fly</name>
    <dbReference type="NCBI Taxonomy" id="7220"/>
    <lineage>
        <taxon>Eukaryota</taxon>
        <taxon>Metazoa</taxon>
        <taxon>Ecdysozoa</taxon>
        <taxon>Arthropoda</taxon>
        <taxon>Hexapoda</taxon>
        <taxon>Insecta</taxon>
        <taxon>Pterygota</taxon>
        <taxon>Neoptera</taxon>
        <taxon>Endopterygota</taxon>
        <taxon>Diptera</taxon>
        <taxon>Brachycera</taxon>
        <taxon>Muscomorpha</taxon>
        <taxon>Ephydroidea</taxon>
        <taxon>Drosophilidae</taxon>
        <taxon>Drosophila</taxon>
        <taxon>Sophophora</taxon>
    </lineage>
</organism>
<protein>
    <recommendedName>
        <fullName>Coiled-coil domain-containing protein 22 homolog</fullName>
    </recommendedName>
</protein>
<reference key="1">
    <citation type="journal article" date="2002" name="Genome Biol.">
        <title>Assessing the impact of comparative genomic sequence data on the functional annotation of the Drosophila genome.</title>
        <authorList>
            <person name="Bergman C.M."/>
            <person name="Pfeiffer B.D."/>
            <person name="Rincon-Limas D.E."/>
            <person name="Hoskins R.A."/>
            <person name="Gnirke A."/>
            <person name="Mungall C.J."/>
            <person name="Wang A.M."/>
            <person name="Kronmiller B."/>
            <person name="Pacleb J.M."/>
            <person name="Park S."/>
            <person name="Stapleton M."/>
            <person name="Wan K.H."/>
            <person name="George R.A."/>
            <person name="de Jong P.J."/>
            <person name="Botas J."/>
            <person name="Rubin G.M."/>
            <person name="Celniker S.E."/>
        </authorList>
    </citation>
    <scope>NUCLEOTIDE SEQUENCE [LARGE SCALE GENOMIC DNA]</scope>
    <source>
        <strain>Tucson 14021-0224.0</strain>
    </source>
</reference>
<feature type="chain" id="PRO_0000338406" description="Coiled-coil domain-containing protein 22 homolog">
    <location>
        <begin position="1"/>
        <end position="553"/>
    </location>
</feature>
<feature type="region of interest" description="Disordered" evidence="2">
    <location>
        <begin position="236"/>
        <end position="264"/>
    </location>
</feature>
<feature type="coiled-coil region" evidence="1">
    <location>
        <begin position="261"/>
        <end position="286"/>
    </location>
</feature>
<feature type="coiled-coil region" evidence="1">
    <location>
        <begin position="314"/>
        <end position="407"/>
    </location>
</feature>
<feature type="coiled-coil region" evidence="1">
    <location>
        <begin position="498"/>
        <end position="549"/>
    </location>
</feature>
<gene>
    <name type="ORF">GG13587</name>
</gene>
<name>CCD22_DROER</name>
<dbReference type="EMBL" id="AY190936">
    <property type="protein sequence ID" value="AAO00992.1"/>
    <property type="molecule type" value="Genomic_DNA"/>
</dbReference>
<dbReference type="SMR" id="Q8I1H7"/>
<dbReference type="eggNOG" id="KOG1937">
    <property type="taxonomic scope" value="Eukaryota"/>
</dbReference>
<dbReference type="OrthoDB" id="10266736at2759"/>
<dbReference type="GO" id="GO:0097602">
    <property type="term" value="F:cullin family protein binding"/>
    <property type="evidence" value="ECO:0007669"/>
    <property type="project" value="TreeGrafter"/>
</dbReference>
<dbReference type="GO" id="GO:2000060">
    <property type="term" value="P:positive regulation of ubiquitin-dependent protein catabolic process"/>
    <property type="evidence" value="ECO:0007669"/>
    <property type="project" value="TreeGrafter"/>
</dbReference>
<dbReference type="InterPro" id="IPR008530">
    <property type="entry name" value="CCDC22"/>
</dbReference>
<dbReference type="InterPro" id="IPR048348">
    <property type="entry name" value="CCDC22_CC"/>
</dbReference>
<dbReference type="InterPro" id="IPR048349">
    <property type="entry name" value="CCDC22_N"/>
</dbReference>
<dbReference type="PANTHER" id="PTHR15668:SF4">
    <property type="entry name" value="COILED-COIL DOMAIN-CONTAINING PROTEIN 22"/>
    <property type="match status" value="1"/>
</dbReference>
<dbReference type="PANTHER" id="PTHR15668">
    <property type="entry name" value="JM1 PROTEIN"/>
    <property type="match status" value="1"/>
</dbReference>
<dbReference type="Pfam" id="PF05667">
    <property type="entry name" value="CCDC22_CC"/>
    <property type="match status" value="1"/>
</dbReference>
<dbReference type="Pfam" id="PF21674">
    <property type="entry name" value="CCDC22_N"/>
    <property type="match status" value="1"/>
</dbReference>